<accession>P0ACA3</accession>
<accession>P05838</accession>
<accession>Q2M8Y4</accession>
<evidence type="ECO:0000269" key="1">
    <source>
    </source>
</evidence>
<evidence type="ECO:0000305" key="2"/>
<evidence type="ECO:0007829" key="3">
    <source>
        <dbReference type="PDB" id="6WMU"/>
    </source>
</evidence>
<keyword id="KW-0002">3D-structure</keyword>
<keyword id="KW-0903">Direct protein sequencing</keyword>
<keyword id="KW-1185">Reference proteome</keyword>
<keyword id="KW-0346">Stress response</keyword>
<organism>
    <name type="scientific">Escherichia coli (strain K12)</name>
    <dbReference type="NCBI Taxonomy" id="83333"/>
    <lineage>
        <taxon>Bacteria</taxon>
        <taxon>Pseudomonadati</taxon>
        <taxon>Pseudomonadota</taxon>
        <taxon>Gammaproteobacteria</taxon>
        <taxon>Enterobacterales</taxon>
        <taxon>Enterobacteriaceae</taxon>
        <taxon>Escherichia</taxon>
    </lineage>
</organism>
<comment type="function">
    <text>Forms an equimolar complex with the RNA polymerase holoenzyme (RNAP) but not with the core enzyme. It is synthesized predominantly when cells are exposed to amino acid starvation, at which time it accounts for over 50% of the total protein synthesized. It is involved in the transition from P1 early to P1 late gene expression. Rnk and SspA can functionally replace P.aeruginosa alginate regulatory gene algR2.</text>
</comment>
<comment type="interaction">
    <interactant intactId="EBI-558482">
        <id>P0ACA3</id>
    </interactant>
    <interactant intactId="EBI-558542">
        <id>P54745</id>
        <label>mngA</label>
    </interactant>
    <organismsDiffer>false</organismsDiffer>
    <experiments>5</experiments>
</comment>
<comment type="induction">
    <text>By amino acid starvation.</text>
</comment>
<comment type="similarity">
    <text evidence="2">Belongs to the GST superfamily. HSP26 family.</text>
</comment>
<feature type="initiator methionine" description="Removed" evidence="1">
    <location>
        <position position="1"/>
    </location>
</feature>
<feature type="chain" id="PRO_0000185876" description="Stringent starvation protein A">
    <location>
        <begin position="2"/>
        <end position="212"/>
    </location>
</feature>
<feature type="domain" description="GST N-terminal">
    <location>
        <begin position="9"/>
        <end position="87"/>
    </location>
</feature>
<feature type="domain" description="GST C-terminal">
    <location>
        <begin position="92"/>
        <end position="209"/>
    </location>
</feature>
<feature type="strand" evidence="3">
    <location>
        <begin position="12"/>
        <end position="15"/>
    </location>
</feature>
<feature type="helix" evidence="3">
    <location>
        <begin position="20"/>
        <end position="32"/>
    </location>
</feature>
<feature type="strand" evidence="3">
    <location>
        <begin position="37"/>
        <end position="40"/>
    </location>
</feature>
<feature type="strand" evidence="3">
    <location>
        <begin position="43"/>
        <end position="45"/>
    </location>
</feature>
<feature type="helix" evidence="3">
    <location>
        <begin position="48"/>
        <end position="53"/>
    </location>
</feature>
<feature type="helix" evidence="3">
    <location>
        <begin position="72"/>
        <end position="82"/>
    </location>
</feature>
<feature type="helix" evidence="3">
    <location>
        <begin position="93"/>
        <end position="119"/>
    </location>
</feature>
<feature type="helix" evidence="3">
    <location>
        <begin position="122"/>
        <end position="143"/>
    </location>
</feature>
<feature type="strand" evidence="3">
    <location>
        <begin position="146"/>
        <end position="148"/>
    </location>
</feature>
<feature type="strand" evidence="3">
    <location>
        <begin position="151"/>
        <end position="153"/>
    </location>
</feature>
<feature type="helix" evidence="3">
    <location>
        <begin position="156"/>
        <end position="166"/>
    </location>
</feature>
<feature type="turn" evidence="3">
    <location>
        <begin position="167"/>
        <end position="172"/>
    </location>
</feature>
<feature type="helix" evidence="3">
    <location>
        <begin position="178"/>
        <end position="192"/>
    </location>
</feature>
<feature type="helix" evidence="3">
    <location>
        <begin position="194"/>
        <end position="199"/>
    </location>
</feature>
<feature type="helix" evidence="3">
    <location>
        <begin position="202"/>
        <end position="205"/>
    </location>
</feature>
<proteinExistence type="evidence at protein level"/>
<dbReference type="EMBL" id="X05088">
    <property type="protein sequence ID" value="CAA28740.1"/>
    <property type="molecule type" value="Genomic_DNA"/>
</dbReference>
<dbReference type="EMBL" id="U18997">
    <property type="protein sequence ID" value="AAA58031.1"/>
    <property type="molecule type" value="Genomic_DNA"/>
</dbReference>
<dbReference type="EMBL" id="U00096">
    <property type="protein sequence ID" value="AAC76261.1"/>
    <property type="molecule type" value="Genomic_DNA"/>
</dbReference>
<dbReference type="EMBL" id="AP009048">
    <property type="protein sequence ID" value="BAE77272.1"/>
    <property type="molecule type" value="Genomic_DNA"/>
</dbReference>
<dbReference type="PIR" id="A26422">
    <property type="entry name" value="RGECSS"/>
</dbReference>
<dbReference type="RefSeq" id="NP_417696.1">
    <property type="nucleotide sequence ID" value="NC_000913.3"/>
</dbReference>
<dbReference type="RefSeq" id="WP_000257293.1">
    <property type="nucleotide sequence ID" value="NZ_STEB01000012.1"/>
</dbReference>
<dbReference type="PDB" id="6WMU">
    <property type="method" value="EM"/>
    <property type="resolution" value="3.18 A"/>
    <property type="chains" value="K/L=1-212"/>
</dbReference>
<dbReference type="PDB" id="7C97">
    <property type="method" value="EM"/>
    <property type="resolution" value="3.68 A"/>
    <property type="chains" value="I/J=1-212"/>
</dbReference>
<dbReference type="PDB" id="7DY6">
    <property type="method" value="EM"/>
    <property type="resolution" value="3.68 A"/>
    <property type="chains" value="I/J=1-212"/>
</dbReference>
<dbReference type="PDBsum" id="6WMU"/>
<dbReference type="PDBsum" id="7C97"/>
<dbReference type="PDBsum" id="7DY6"/>
<dbReference type="EMDB" id="EMD-30914"/>
<dbReference type="SMR" id="P0ACA3"/>
<dbReference type="BioGRID" id="4262445">
    <property type="interactions" value="18"/>
</dbReference>
<dbReference type="BioGRID" id="849148">
    <property type="interactions" value="2"/>
</dbReference>
<dbReference type="DIP" id="DIP-48104N"/>
<dbReference type="FunCoup" id="P0ACA3">
    <property type="interactions" value="432"/>
</dbReference>
<dbReference type="IntAct" id="P0ACA3">
    <property type="interactions" value="13"/>
</dbReference>
<dbReference type="STRING" id="511145.b3229"/>
<dbReference type="TCDB" id="1.A.12.3.1">
    <property type="family name" value="the intracellular chloride channel (clic) family"/>
</dbReference>
<dbReference type="jPOST" id="P0ACA3"/>
<dbReference type="PaxDb" id="511145-b3229"/>
<dbReference type="EnsemblBacteria" id="AAC76261">
    <property type="protein sequence ID" value="AAC76261"/>
    <property type="gene ID" value="b3229"/>
</dbReference>
<dbReference type="GeneID" id="89518065"/>
<dbReference type="GeneID" id="944744"/>
<dbReference type="KEGG" id="ecj:JW3198"/>
<dbReference type="KEGG" id="eco:b3229"/>
<dbReference type="KEGG" id="ecoc:C3026_17570"/>
<dbReference type="PATRIC" id="fig|1411691.4.peg.3499"/>
<dbReference type="EchoBASE" id="EB0970"/>
<dbReference type="eggNOG" id="COG0625">
    <property type="taxonomic scope" value="Bacteria"/>
</dbReference>
<dbReference type="HOGENOM" id="CLU_011226_9_3_6"/>
<dbReference type="InParanoid" id="P0ACA3"/>
<dbReference type="OMA" id="ADHYSHR"/>
<dbReference type="OrthoDB" id="9781431at2"/>
<dbReference type="PhylomeDB" id="P0ACA3"/>
<dbReference type="BioCyc" id="EcoCyc:EG10977-MONOMER"/>
<dbReference type="PRO" id="PR:P0ACA3"/>
<dbReference type="Proteomes" id="UP000000625">
    <property type="component" value="Chromosome"/>
</dbReference>
<dbReference type="GO" id="GO:0005737">
    <property type="term" value="C:cytoplasm"/>
    <property type="evidence" value="ECO:0000318"/>
    <property type="project" value="GO_Central"/>
</dbReference>
<dbReference type="GO" id="GO:0005829">
    <property type="term" value="C:cytosol"/>
    <property type="evidence" value="ECO:0000314"/>
    <property type="project" value="EcoCyc"/>
</dbReference>
<dbReference type="GO" id="GO:0045893">
    <property type="term" value="P:positive regulation of DNA-templated transcription"/>
    <property type="evidence" value="ECO:0000314"/>
    <property type="project" value="EcoCyc"/>
</dbReference>
<dbReference type="GO" id="GO:0042594">
    <property type="term" value="P:response to starvation"/>
    <property type="evidence" value="ECO:0000270"/>
    <property type="project" value="EcoCyc"/>
</dbReference>
<dbReference type="GO" id="GO:0006950">
    <property type="term" value="P:response to stress"/>
    <property type="evidence" value="ECO:0000315"/>
    <property type="project" value="EcoCyc"/>
</dbReference>
<dbReference type="CDD" id="cd03186">
    <property type="entry name" value="GST_C_SspA"/>
    <property type="match status" value="1"/>
</dbReference>
<dbReference type="CDD" id="cd03059">
    <property type="entry name" value="GST_N_SspA"/>
    <property type="match status" value="1"/>
</dbReference>
<dbReference type="FunFam" id="1.20.1050.10:FF:000002">
    <property type="entry name" value="Stringent starvation protein A"/>
    <property type="match status" value="1"/>
</dbReference>
<dbReference type="Gene3D" id="1.20.1050.10">
    <property type="match status" value="1"/>
</dbReference>
<dbReference type="Gene3D" id="3.40.30.10">
    <property type="entry name" value="Glutaredoxin"/>
    <property type="match status" value="1"/>
</dbReference>
<dbReference type="InterPro" id="IPR010987">
    <property type="entry name" value="Glutathione-S-Trfase_C-like"/>
</dbReference>
<dbReference type="InterPro" id="IPR036282">
    <property type="entry name" value="Glutathione-S-Trfase_C_sf"/>
</dbReference>
<dbReference type="InterPro" id="IPR040079">
    <property type="entry name" value="Glutathione_S-Trfase"/>
</dbReference>
<dbReference type="InterPro" id="IPR004045">
    <property type="entry name" value="Glutathione_S-Trfase_N"/>
</dbReference>
<dbReference type="InterPro" id="IPR004046">
    <property type="entry name" value="GST_C"/>
</dbReference>
<dbReference type="InterPro" id="IPR050983">
    <property type="entry name" value="GST_Omega/HSP26"/>
</dbReference>
<dbReference type="InterPro" id="IPR034342">
    <property type="entry name" value="SspA_C"/>
</dbReference>
<dbReference type="InterPro" id="IPR034341">
    <property type="entry name" value="SspA_N"/>
</dbReference>
<dbReference type="InterPro" id="IPR036249">
    <property type="entry name" value="Thioredoxin-like_sf"/>
</dbReference>
<dbReference type="NCBIfam" id="NF007016">
    <property type="entry name" value="PRK09481.1"/>
    <property type="match status" value="1"/>
</dbReference>
<dbReference type="PANTHER" id="PTHR43968">
    <property type="match status" value="1"/>
</dbReference>
<dbReference type="PANTHER" id="PTHR43968:SF6">
    <property type="entry name" value="GLUTATHIONE S-TRANSFERASE OMEGA"/>
    <property type="match status" value="1"/>
</dbReference>
<dbReference type="Pfam" id="PF00043">
    <property type="entry name" value="GST_C"/>
    <property type="match status" value="1"/>
</dbReference>
<dbReference type="Pfam" id="PF02798">
    <property type="entry name" value="GST_N"/>
    <property type="match status" value="1"/>
</dbReference>
<dbReference type="SFLD" id="SFLDS00019">
    <property type="entry name" value="Glutathione_Transferase_(cytos"/>
    <property type="match status" value="1"/>
</dbReference>
<dbReference type="SFLD" id="SFLDG00358">
    <property type="entry name" value="Main_(cytGST)"/>
    <property type="match status" value="1"/>
</dbReference>
<dbReference type="SUPFAM" id="SSF47616">
    <property type="entry name" value="GST C-terminal domain-like"/>
    <property type="match status" value="1"/>
</dbReference>
<dbReference type="SUPFAM" id="SSF52833">
    <property type="entry name" value="Thioredoxin-like"/>
    <property type="match status" value="1"/>
</dbReference>
<dbReference type="PROSITE" id="PS50405">
    <property type="entry name" value="GST_CTER"/>
    <property type="match status" value="1"/>
</dbReference>
<dbReference type="PROSITE" id="PS50404">
    <property type="entry name" value="GST_NTER"/>
    <property type="match status" value="1"/>
</dbReference>
<protein>
    <recommendedName>
        <fullName>Stringent starvation protein A</fullName>
    </recommendedName>
</protein>
<gene>
    <name type="primary">sspA</name>
    <name type="synonym">pog</name>
    <name type="synonym">ssp</name>
    <name type="ordered locus">b3229</name>
    <name type="ordered locus">JW3198</name>
</gene>
<reference key="1">
    <citation type="journal article" date="1987" name="Nucleic Acids Res.">
        <title>Structure of the gene for the stringent starvation protein of Escherichia coli.</title>
        <authorList>
            <person name="Serizawa H."/>
            <person name="Fukuda R."/>
        </authorList>
    </citation>
    <scope>NUCLEOTIDE SEQUENCE [GENOMIC DNA]</scope>
</reference>
<reference key="2">
    <citation type="journal article" date="1997" name="Science">
        <title>The complete genome sequence of Escherichia coli K-12.</title>
        <authorList>
            <person name="Blattner F.R."/>
            <person name="Plunkett G. III"/>
            <person name="Bloch C.A."/>
            <person name="Perna N.T."/>
            <person name="Burland V."/>
            <person name="Riley M."/>
            <person name="Collado-Vides J."/>
            <person name="Glasner J.D."/>
            <person name="Rode C.K."/>
            <person name="Mayhew G.F."/>
            <person name="Gregor J."/>
            <person name="Davis N.W."/>
            <person name="Kirkpatrick H.A."/>
            <person name="Goeden M.A."/>
            <person name="Rose D.J."/>
            <person name="Mau B."/>
            <person name="Shao Y."/>
        </authorList>
    </citation>
    <scope>NUCLEOTIDE SEQUENCE [LARGE SCALE GENOMIC DNA]</scope>
    <source>
        <strain>K12 / MG1655 / ATCC 47076</strain>
    </source>
</reference>
<reference key="3">
    <citation type="journal article" date="2006" name="Mol. Syst. Biol.">
        <title>Highly accurate genome sequences of Escherichia coli K-12 strains MG1655 and W3110.</title>
        <authorList>
            <person name="Hayashi K."/>
            <person name="Morooka N."/>
            <person name="Yamamoto Y."/>
            <person name="Fujita K."/>
            <person name="Isono K."/>
            <person name="Choi S."/>
            <person name="Ohtsubo E."/>
            <person name="Baba T."/>
            <person name="Wanner B.L."/>
            <person name="Mori H."/>
            <person name="Horiuchi T."/>
        </authorList>
    </citation>
    <scope>NUCLEOTIDE SEQUENCE [LARGE SCALE GENOMIC DNA]</scope>
    <source>
        <strain>K12 / W3110 / ATCC 27325 / DSM 5911</strain>
    </source>
</reference>
<reference key="4">
    <citation type="journal article" date="1997" name="Electrophoresis">
        <title>Comparing the predicted and observed properties of proteins encoded in the genome of Escherichia coli K-12.</title>
        <authorList>
            <person name="Link A.J."/>
            <person name="Robison K."/>
            <person name="Church G.M."/>
        </authorList>
    </citation>
    <scope>PROTEIN SEQUENCE OF 2-13</scope>
    <source>
        <strain>K12 / EMG2</strain>
    </source>
</reference>
<reference key="5">
    <citation type="journal article" date="1994" name="Mol. Microbiol.">
        <title>Starvation-induced expression of SspA and SspB: the effects of a null mutation in sspA on Escherichia coli protein synthesis and survival during growth and prolonged starvation.</title>
        <authorList>
            <person name="Williams M.D."/>
            <person name="Ouyang T.X."/>
            <person name="Flickinger M.C."/>
        </authorList>
    </citation>
    <scope>CHARACTERIZATION</scope>
</reference>
<reference key="6">
    <citation type="journal article" date="1997" name="Electrophoresis">
        <title>Escherichia coli proteome analysis using the gene-protein database.</title>
        <authorList>
            <person name="VanBogelen R.A."/>
            <person name="Abshire K.Z."/>
            <person name="Moldover B."/>
            <person name="Olson E.R."/>
            <person name="Neidhardt F.C."/>
        </authorList>
    </citation>
    <scope>IDENTIFICATION BY 2D-GEL</scope>
</reference>
<name>SSPA_ECOLI</name>
<sequence>MAVAANKRSVMTLFSGPTDIYSHQVRIVLAEKGVSFEIEHVEKDNPPQDLIDLNPNQSVPTLVDRELTLWESRIIMEYLDERFPHPPLMPVYPVARGESRLYMHRIEKDWYTLMNTIINGSASEADAARKQLREELLAIAPVFGQKPYFLSDEFSLVDCYLAPLLWRLPQLGIEFSGPGAKELKGYMTRVFERDSFLASLTEAEREMRLGRS</sequence>